<reference key="1">
    <citation type="submission" date="2007-03" db="EMBL/GenBank/DDBJ databases">
        <title>Complete sequence of chromosome 1 of Burkholderia vietnamiensis G4.</title>
        <authorList>
            <consortium name="US DOE Joint Genome Institute"/>
            <person name="Copeland A."/>
            <person name="Lucas S."/>
            <person name="Lapidus A."/>
            <person name="Barry K."/>
            <person name="Detter J.C."/>
            <person name="Glavina del Rio T."/>
            <person name="Hammon N."/>
            <person name="Israni S."/>
            <person name="Dalin E."/>
            <person name="Tice H."/>
            <person name="Pitluck S."/>
            <person name="Chain P."/>
            <person name="Malfatti S."/>
            <person name="Shin M."/>
            <person name="Vergez L."/>
            <person name="Schmutz J."/>
            <person name="Larimer F."/>
            <person name="Land M."/>
            <person name="Hauser L."/>
            <person name="Kyrpides N."/>
            <person name="Tiedje J."/>
            <person name="Richardson P."/>
        </authorList>
    </citation>
    <scope>NUCLEOTIDE SEQUENCE [LARGE SCALE GENOMIC DNA]</scope>
    <source>
        <strain>G4 / LMG 22486</strain>
    </source>
</reference>
<protein>
    <recommendedName>
        <fullName evidence="2">Small ribosomal subunit protein uS12</fullName>
    </recommendedName>
    <alternativeName>
        <fullName evidence="4">30S ribosomal protein S12</fullName>
    </alternativeName>
</protein>
<sequence>MPTINQLVRKGRQSETTKSKSPALQDCPQRRGVCTRVYTTTPKKPNSALRKVAKVRLTNGFEVISYIGGEGHNLQEHSVVLIRGGRVKDLPGVRYHMVRGSLDTQGVKDRKQARSKYGAKRAKAAK</sequence>
<organism>
    <name type="scientific">Burkholderia vietnamiensis (strain G4 / LMG 22486)</name>
    <name type="common">Burkholderia cepacia (strain R1808)</name>
    <dbReference type="NCBI Taxonomy" id="269482"/>
    <lineage>
        <taxon>Bacteria</taxon>
        <taxon>Pseudomonadati</taxon>
        <taxon>Pseudomonadota</taxon>
        <taxon>Betaproteobacteria</taxon>
        <taxon>Burkholderiales</taxon>
        <taxon>Burkholderiaceae</taxon>
        <taxon>Burkholderia</taxon>
        <taxon>Burkholderia cepacia complex</taxon>
    </lineage>
</organism>
<proteinExistence type="inferred from homology"/>
<comment type="function">
    <text evidence="2">With S4 and S5 plays an important role in translational accuracy.</text>
</comment>
<comment type="function">
    <text evidence="2">Interacts with and stabilizes bases of the 16S rRNA that are involved in tRNA selection in the A site and with the mRNA backbone. Located at the interface of the 30S and 50S subunits, it traverses the body of the 30S subunit contacting proteins on the other side and probably holding the rRNA structure together. The combined cluster of proteins S8, S12 and S17 appears to hold together the shoulder and platform of the 30S subunit.</text>
</comment>
<comment type="subunit">
    <text evidence="2">Part of the 30S ribosomal subunit. Contacts proteins S8 and S17. May interact with IF1 in the 30S initiation complex.</text>
</comment>
<comment type="similarity">
    <text evidence="2">Belongs to the universal ribosomal protein uS12 family.</text>
</comment>
<dbReference type="EMBL" id="CP000614">
    <property type="protein sequence ID" value="ABO53338.1"/>
    <property type="molecule type" value="Genomic_DNA"/>
</dbReference>
<dbReference type="SMR" id="A4JAN5"/>
<dbReference type="KEGG" id="bvi:Bcep1808_0325"/>
<dbReference type="eggNOG" id="COG0048">
    <property type="taxonomic scope" value="Bacteria"/>
</dbReference>
<dbReference type="HOGENOM" id="CLU_104295_1_2_4"/>
<dbReference type="Proteomes" id="UP000002287">
    <property type="component" value="Chromosome 1"/>
</dbReference>
<dbReference type="GO" id="GO:0015935">
    <property type="term" value="C:small ribosomal subunit"/>
    <property type="evidence" value="ECO:0007669"/>
    <property type="project" value="InterPro"/>
</dbReference>
<dbReference type="GO" id="GO:0019843">
    <property type="term" value="F:rRNA binding"/>
    <property type="evidence" value="ECO:0007669"/>
    <property type="project" value="UniProtKB-UniRule"/>
</dbReference>
<dbReference type="GO" id="GO:0003735">
    <property type="term" value="F:structural constituent of ribosome"/>
    <property type="evidence" value="ECO:0007669"/>
    <property type="project" value="InterPro"/>
</dbReference>
<dbReference type="GO" id="GO:0000049">
    <property type="term" value="F:tRNA binding"/>
    <property type="evidence" value="ECO:0007669"/>
    <property type="project" value="UniProtKB-UniRule"/>
</dbReference>
<dbReference type="GO" id="GO:0006412">
    <property type="term" value="P:translation"/>
    <property type="evidence" value="ECO:0007669"/>
    <property type="project" value="UniProtKB-UniRule"/>
</dbReference>
<dbReference type="CDD" id="cd03368">
    <property type="entry name" value="Ribosomal_S12"/>
    <property type="match status" value="1"/>
</dbReference>
<dbReference type="FunFam" id="2.40.50.140:FF:000001">
    <property type="entry name" value="30S ribosomal protein S12"/>
    <property type="match status" value="1"/>
</dbReference>
<dbReference type="Gene3D" id="2.40.50.140">
    <property type="entry name" value="Nucleic acid-binding proteins"/>
    <property type="match status" value="1"/>
</dbReference>
<dbReference type="HAMAP" id="MF_00403_B">
    <property type="entry name" value="Ribosomal_uS12_B"/>
    <property type="match status" value="1"/>
</dbReference>
<dbReference type="InterPro" id="IPR012340">
    <property type="entry name" value="NA-bd_OB-fold"/>
</dbReference>
<dbReference type="InterPro" id="IPR006032">
    <property type="entry name" value="Ribosomal_uS12"/>
</dbReference>
<dbReference type="InterPro" id="IPR005679">
    <property type="entry name" value="Ribosomal_uS12_bac"/>
</dbReference>
<dbReference type="NCBIfam" id="TIGR00981">
    <property type="entry name" value="rpsL_bact"/>
    <property type="match status" value="1"/>
</dbReference>
<dbReference type="PANTHER" id="PTHR11652">
    <property type="entry name" value="30S RIBOSOMAL PROTEIN S12 FAMILY MEMBER"/>
    <property type="match status" value="1"/>
</dbReference>
<dbReference type="Pfam" id="PF00164">
    <property type="entry name" value="Ribosom_S12_S23"/>
    <property type="match status" value="1"/>
</dbReference>
<dbReference type="PIRSF" id="PIRSF002133">
    <property type="entry name" value="Ribosomal_S12/S23"/>
    <property type="match status" value="1"/>
</dbReference>
<dbReference type="PRINTS" id="PR01034">
    <property type="entry name" value="RIBOSOMALS12"/>
</dbReference>
<dbReference type="SUPFAM" id="SSF50249">
    <property type="entry name" value="Nucleic acid-binding proteins"/>
    <property type="match status" value="1"/>
</dbReference>
<dbReference type="PROSITE" id="PS00055">
    <property type="entry name" value="RIBOSOMAL_S12"/>
    <property type="match status" value="1"/>
</dbReference>
<gene>
    <name evidence="2" type="primary">rpsL</name>
    <name type="ordered locus">Bcep1808_0325</name>
</gene>
<keyword id="KW-0488">Methylation</keyword>
<keyword id="KW-0687">Ribonucleoprotein</keyword>
<keyword id="KW-0689">Ribosomal protein</keyword>
<keyword id="KW-0694">RNA-binding</keyword>
<keyword id="KW-0699">rRNA-binding</keyword>
<keyword id="KW-0820">tRNA-binding</keyword>
<evidence type="ECO:0000250" key="1"/>
<evidence type="ECO:0000255" key="2">
    <source>
        <dbReference type="HAMAP-Rule" id="MF_00403"/>
    </source>
</evidence>
<evidence type="ECO:0000256" key="3">
    <source>
        <dbReference type="SAM" id="MobiDB-lite"/>
    </source>
</evidence>
<evidence type="ECO:0000305" key="4"/>
<name>RS12_BURVG</name>
<feature type="chain" id="PRO_1000049776" description="Small ribosomal subunit protein uS12">
    <location>
        <begin position="1"/>
        <end position="126"/>
    </location>
</feature>
<feature type="region of interest" description="Disordered" evidence="3">
    <location>
        <begin position="1"/>
        <end position="28"/>
    </location>
</feature>
<feature type="region of interest" description="Disordered" evidence="3">
    <location>
        <begin position="103"/>
        <end position="126"/>
    </location>
</feature>
<feature type="compositionally biased region" description="Basic residues" evidence="3">
    <location>
        <begin position="113"/>
        <end position="126"/>
    </location>
</feature>
<feature type="modified residue" description="3-methylthioaspartic acid" evidence="1">
    <location>
        <position position="89"/>
    </location>
</feature>
<accession>A4JAN5</accession>